<protein>
    <recommendedName>
        <fullName>Myocyte-specific enhancer factor 2D</fullName>
    </recommendedName>
</protein>
<dbReference type="EMBL" id="L16794">
    <property type="protein sequence ID" value="AAA93194.1"/>
    <property type="molecule type" value="mRNA"/>
</dbReference>
<dbReference type="EMBL" id="L16795">
    <property type="protein sequence ID" value="AAA59579.1"/>
    <property type="molecule type" value="Genomic_DNA"/>
</dbReference>
<dbReference type="EMBL" id="AL139412">
    <property type="status" value="NOT_ANNOTATED_CDS"/>
    <property type="molecule type" value="Genomic_DNA"/>
</dbReference>
<dbReference type="EMBL" id="CH471121">
    <property type="protein sequence ID" value="EAW52948.1"/>
    <property type="molecule type" value="Genomic_DNA"/>
</dbReference>
<dbReference type="EMBL" id="CH471121">
    <property type="protein sequence ID" value="EAW52952.1"/>
    <property type="molecule type" value="Genomic_DNA"/>
</dbReference>
<dbReference type="EMBL" id="BC040949">
    <property type="protein sequence ID" value="AAH40949.1"/>
    <property type="molecule type" value="mRNA"/>
</dbReference>
<dbReference type="EMBL" id="BC054520">
    <property type="protein sequence ID" value="AAH54520.1"/>
    <property type="molecule type" value="mRNA"/>
</dbReference>
<dbReference type="CCDS" id="CCDS1143.1">
    <molecule id="Q14814-1"/>
</dbReference>
<dbReference type="CCDS" id="CCDS60304.1">
    <molecule id="Q14814-4"/>
</dbReference>
<dbReference type="PIR" id="I53124">
    <property type="entry name" value="I53124"/>
</dbReference>
<dbReference type="RefSeq" id="NP_001258558.1">
    <molecule id="Q14814-4"/>
    <property type="nucleotide sequence ID" value="NM_001271629.2"/>
</dbReference>
<dbReference type="RefSeq" id="NP_005911.1">
    <molecule id="Q14814-1"/>
    <property type="nucleotide sequence ID" value="NM_005920.4"/>
</dbReference>
<dbReference type="RefSeq" id="XP_005245226.1">
    <molecule id="Q14814-1"/>
    <property type="nucleotide sequence ID" value="XM_005245169.5"/>
</dbReference>
<dbReference type="RefSeq" id="XP_005245227.1">
    <molecule id="Q14814-1"/>
    <property type="nucleotide sequence ID" value="XM_005245170.4"/>
</dbReference>
<dbReference type="RefSeq" id="XP_006711393.1">
    <molecule id="Q14814-1"/>
    <property type="nucleotide sequence ID" value="XM_006711330.4"/>
</dbReference>
<dbReference type="RefSeq" id="XP_006711395.1">
    <molecule id="Q14814-2"/>
    <property type="nucleotide sequence ID" value="XM_006711332.4"/>
</dbReference>
<dbReference type="RefSeq" id="XP_006711396.1">
    <molecule id="Q14814-4"/>
    <property type="nucleotide sequence ID" value="XM_006711333.3"/>
</dbReference>
<dbReference type="RefSeq" id="XP_006711397.1">
    <molecule id="Q14814-5"/>
    <property type="nucleotide sequence ID" value="XM_006711334.4"/>
</dbReference>
<dbReference type="RefSeq" id="XP_011507871.1">
    <molecule id="Q14814-1"/>
    <property type="nucleotide sequence ID" value="XM_011509569.4"/>
</dbReference>
<dbReference type="RefSeq" id="XP_016856803.1">
    <molecule id="Q14814-4"/>
    <property type="nucleotide sequence ID" value="XM_017001314.2"/>
</dbReference>
<dbReference type="RefSeq" id="XP_016856804.1">
    <molecule id="Q14814-4"/>
    <property type="nucleotide sequence ID" value="XM_017001315.2"/>
</dbReference>
<dbReference type="RefSeq" id="XP_047276949.1">
    <molecule id="Q14814-1"/>
    <property type="nucleotide sequence ID" value="XM_047420993.1"/>
</dbReference>
<dbReference type="RefSeq" id="XP_047276950.1">
    <molecule id="Q14814-1"/>
    <property type="nucleotide sequence ID" value="XM_047420994.1"/>
</dbReference>
<dbReference type="RefSeq" id="XP_047276951.1">
    <molecule id="Q14814-1"/>
    <property type="nucleotide sequence ID" value="XM_047420995.1"/>
</dbReference>
<dbReference type="RefSeq" id="XP_047276953.1">
    <molecule id="Q14814-1"/>
    <property type="nucleotide sequence ID" value="XM_047420997.1"/>
</dbReference>
<dbReference type="RefSeq" id="XP_047276954.1">
    <molecule id="Q14814-1"/>
    <property type="nucleotide sequence ID" value="XM_047420998.1"/>
</dbReference>
<dbReference type="RefSeq" id="XP_047276955.1">
    <molecule id="Q14814-1"/>
    <property type="nucleotide sequence ID" value="XM_047420999.1"/>
</dbReference>
<dbReference type="RefSeq" id="XP_047276958.1">
    <molecule id="Q14814-1"/>
    <property type="nucleotide sequence ID" value="XM_047421002.1"/>
</dbReference>
<dbReference type="RefSeq" id="XP_047276960.1">
    <molecule id="Q14814-2"/>
    <property type="nucleotide sequence ID" value="XM_047421004.1"/>
</dbReference>
<dbReference type="RefSeq" id="XP_047276961.1">
    <molecule id="Q14814-4"/>
    <property type="nucleotide sequence ID" value="XM_047421005.1"/>
</dbReference>
<dbReference type="RefSeq" id="XP_047276965.1">
    <molecule id="Q14814-4"/>
    <property type="nucleotide sequence ID" value="XM_047421009.1"/>
</dbReference>
<dbReference type="RefSeq" id="XP_054188816.1">
    <molecule id="Q14814-1"/>
    <property type="nucleotide sequence ID" value="XM_054332841.1"/>
</dbReference>
<dbReference type="RefSeq" id="XP_054188817.1">
    <molecule id="Q14814-1"/>
    <property type="nucleotide sequence ID" value="XM_054332842.1"/>
</dbReference>
<dbReference type="RefSeq" id="XP_054188818.1">
    <molecule id="Q14814-1"/>
    <property type="nucleotide sequence ID" value="XM_054332843.1"/>
</dbReference>
<dbReference type="RefSeq" id="XP_054188819.1">
    <molecule id="Q14814-1"/>
    <property type="nucleotide sequence ID" value="XM_054332844.1"/>
</dbReference>
<dbReference type="RefSeq" id="XP_054188820.1">
    <molecule id="Q14814-2"/>
    <property type="nucleotide sequence ID" value="XM_054332845.1"/>
</dbReference>
<dbReference type="RefSeq" id="XP_054188821.1">
    <molecule id="Q14814-2"/>
    <property type="nucleotide sequence ID" value="XM_054332846.1"/>
</dbReference>
<dbReference type="RefSeq" id="XP_054188822.1">
    <molecule id="Q14814-4"/>
    <property type="nucleotide sequence ID" value="XM_054332847.1"/>
</dbReference>
<dbReference type="RefSeq" id="XP_054188823.1">
    <molecule id="Q14814-4"/>
    <property type="nucleotide sequence ID" value="XM_054332848.1"/>
</dbReference>
<dbReference type="RefSeq" id="XP_054188824.1">
    <molecule id="Q14814-4"/>
    <property type="nucleotide sequence ID" value="XM_054332849.1"/>
</dbReference>
<dbReference type="RefSeq" id="XP_054188825.1">
    <molecule id="Q14814-4"/>
    <property type="nucleotide sequence ID" value="XM_054332850.1"/>
</dbReference>
<dbReference type="RefSeq" id="XP_054188826.1">
    <molecule id="Q14814-4"/>
    <property type="nucleotide sequence ID" value="XM_054332851.1"/>
</dbReference>
<dbReference type="RefSeq" id="XP_054188827.1">
    <molecule id="Q14814-5"/>
    <property type="nucleotide sequence ID" value="XM_054332852.1"/>
</dbReference>
<dbReference type="RefSeq" id="XP_054192627.1">
    <molecule id="Q14814-1"/>
    <property type="nucleotide sequence ID" value="XM_054336652.1"/>
</dbReference>
<dbReference type="RefSeq" id="XP_054192628.1">
    <molecule id="Q14814-1"/>
    <property type="nucleotide sequence ID" value="XM_054336653.1"/>
</dbReference>
<dbReference type="RefSeq" id="XP_054192629.1">
    <molecule id="Q14814-1"/>
    <property type="nucleotide sequence ID" value="XM_054336654.1"/>
</dbReference>
<dbReference type="RefSeq" id="XP_054192630.1">
    <molecule id="Q14814-1"/>
    <property type="nucleotide sequence ID" value="XM_054336655.1"/>
</dbReference>
<dbReference type="RefSeq" id="XP_054192631.1">
    <molecule id="Q14814-2"/>
    <property type="nucleotide sequence ID" value="XM_054336656.1"/>
</dbReference>
<dbReference type="RefSeq" id="XP_054192632.1">
    <molecule id="Q14814-2"/>
    <property type="nucleotide sequence ID" value="XM_054336657.1"/>
</dbReference>
<dbReference type="RefSeq" id="XP_054192633.1">
    <molecule id="Q14814-4"/>
    <property type="nucleotide sequence ID" value="XM_054336658.1"/>
</dbReference>
<dbReference type="RefSeq" id="XP_054192634.1">
    <molecule id="Q14814-4"/>
    <property type="nucleotide sequence ID" value="XM_054336659.1"/>
</dbReference>
<dbReference type="RefSeq" id="XP_054192635.1">
    <molecule id="Q14814-4"/>
    <property type="nucleotide sequence ID" value="XM_054336660.1"/>
</dbReference>
<dbReference type="RefSeq" id="XP_054192636.1">
    <molecule id="Q14814-4"/>
    <property type="nucleotide sequence ID" value="XM_054336661.1"/>
</dbReference>
<dbReference type="RefSeq" id="XP_054192637.1">
    <molecule id="Q14814-4"/>
    <property type="nucleotide sequence ID" value="XM_054336662.1"/>
</dbReference>
<dbReference type="RefSeq" id="XP_054192638.1">
    <molecule id="Q14814-5"/>
    <property type="nucleotide sequence ID" value="XM_054336663.1"/>
</dbReference>
<dbReference type="PDB" id="7X1N">
    <property type="method" value="X-ray"/>
    <property type="resolution" value="3.31 A"/>
    <property type="chains" value="A/B/C/D=2-95"/>
</dbReference>
<dbReference type="PDB" id="8C84">
    <property type="method" value="X-ray"/>
    <property type="resolution" value="1.90 A"/>
    <property type="chains" value="A/B=2-94"/>
</dbReference>
<dbReference type="PDBsum" id="7X1N"/>
<dbReference type="PDBsum" id="8C84"/>
<dbReference type="SMR" id="Q14814"/>
<dbReference type="BioGRID" id="110373">
    <property type="interactions" value="83"/>
</dbReference>
<dbReference type="CORUM" id="Q14814"/>
<dbReference type="ELM" id="Q14814"/>
<dbReference type="FunCoup" id="Q14814">
    <property type="interactions" value="2204"/>
</dbReference>
<dbReference type="IntAct" id="Q14814">
    <property type="interactions" value="46"/>
</dbReference>
<dbReference type="MINT" id="Q14814"/>
<dbReference type="STRING" id="9606.ENSP00000271555"/>
<dbReference type="BindingDB" id="Q14814"/>
<dbReference type="GlyConnect" id="2862">
    <property type="glycosylation" value="1 O-GlcNAc glycan (1 site)"/>
</dbReference>
<dbReference type="GlyCosmos" id="Q14814">
    <property type="glycosylation" value="18 sites, 2 glycans"/>
</dbReference>
<dbReference type="GlyGen" id="Q14814">
    <property type="glycosylation" value="19 sites, 2 O-linked glycans (18 sites)"/>
</dbReference>
<dbReference type="iPTMnet" id="Q14814"/>
<dbReference type="PhosphoSitePlus" id="Q14814"/>
<dbReference type="BioMuta" id="MEF2D"/>
<dbReference type="DMDM" id="2500876"/>
<dbReference type="jPOST" id="Q14814"/>
<dbReference type="MassIVE" id="Q14814"/>
<dbReference type="PaxDb" id="9606-ENSP00000271555"/>
<dbReference type="PeptideAtlas" id="Q14814"/>
<dbReference type="ProteomicsDB" id="60190">
    <molecule id="Q14814-1"/>
</dbReference>
<dbReference type="ProteomicsDB" id="60191">
    <molecule id="Q14814-2"/>
</dbReference>
<dbReference type="ProteomicsDB" id="60192">
    <molecule id="Q14814-3"/>
</dbReference>
<dbReference type="ProteomicsDB" id="60193">
    <molecule id="Q14814-4"/>
</dbReference>
<dbReference type="ProteomicsDB" id="60194">
    <molecule id="Q14814-5"/>
</dbReference>
<dbReference type="ProteomicsDB" id="60195">
    <molecule id="Q14814-6"/>
</dbReference>
<dbReference type="Pumba" id="Q14814"/>
<dbReference type="Antibodypedia" id="1437">
    <property type="antibodies" value="507 antibodies from 35 providers"/>
</dbReference>
<dbReference type="DNASU" id="4209"/>
<dbReference type="Ensembl" id="ENST00000348159.9">
    <molecule id="Q14814-1"/>
    <property type="protein sequence ID" value="ENSP00000271555.5"/>
    <property type="gene ID" value="ENSG00000116604.19"/>
</dbReference>
<dbReference type="Ensembl" id="ENST00000360595.7">
    <molecule id="Q14814-4"/>
    <property type="protein sequence ID" value="ENSP00000353803.3"/>
    <property type="gene ID" value="ENSG00000116604.19"/>
</dbReference>
<dbReference type="Ensembl" id="ENST00000464356.6">
    <molecule id="Q14814-5"/>
    <property type="protein sequence ID" value="ENSP00000476788.1"/>
    <property type="gene ID" value="ENSG00000116604.19"/>
</dbReference>
<dbReference type="Ensembl" id="ENST00000708595.1">
    <molecule id="Q14814-5"/>
    <property type="protein sequence ID" value="ENSP00000517291.1"/>
    <property type="gene ID" value="ENSG00000291761.1"/>
</dbReference>
<dbReference type="Ensembl" id="ENST00000708596.1">
    <molecule id="Q14814-1"/>
    <property type="protein sequence ID" value="ENSP00000517292.1"/>
    <property type="gene ID" value="ENSG00000291761.1"/>
</dbReference>
<dbReference type="Ensembl" id="ENST00000708597.1">
    <molecule id="Q14814-4"/>
    <property type="protein sequence ID" value="ENSP00000517293.1"/>
    <property type="gene ID" value="ENSG00000291761.1"/>
</dbReference>
<dbReference type="GeneID" id="4209"/>
<dbReference type="KEGG" id="hsa:4209"/>
<dbReference type="MANE-Select" id="ENST00000348159.9">
    <property type="protein sequence ID" value="ENSP00000271555.5"/>
    <property type="RefSeq nucleotide sequence ID" value="NM_005920.4"/>
    <property type="RefSeq protein sequence ID" value="NP_005911.1"/>
</dbReference>
<dbReference type="UCSC" id="uc001fpb.5">
    <molecule id="Q14814-1"/>
    <property type="organism name" value="human"/>
</dbReference>
<dbReference type="AGR" id="HGNC:6997"/>
<dbReference type="CTD" id="4209"/>
<dbReference type="DisGeNET" id="4209"/>
<dbReference type="GeneCards" id="MEF2D"/>
<dbReference type="HGNC" id="HGNC:6997">
    <property type="gene designation" value="MEF2D"/>
</dbReference>
<dbReference type="HPA" id="ENSG00000116604">
    <property type="expression patterns" value="Tissue enhanced (skeletal)"/>
</dbReference>
<dbReference type="MIM" id="600663">
    <property type="type" value="gene"/>
</dbReference>
<dbReference type="neXtProt" id="NX_Q14814"/>
<dbReference type="OpenTargets" id="ENSG00000116604"/>
<dbReference type="PharmGKB" id="PA30735"/>
<dbReference type="VEuPathDB" id="HostDB:ENSG00000116604"/>
<dbReference type="eggNOG" id="KOG0014">
    <property type="taxonomic scope" value="Eukaryota"/>
</dbReference>
<dbReference type="GeneTree" id="ENSGT00940000159463"/>
<dbReference type="HOGENOM" id="CLU_022902_4_0_1"/>
<dbReference type="InParanoid" id="Q14814"/>
<dbReference type="OMA" id="NISAWHQ"/>
<dbReference type="OrthoDB" id="1898716at2759"/>
<dbReference type="PAN-GO" id="Q14814">
    <property type="GO annotations" value="4 GO annotations based on evolutionary models"/>
</dbReference>
<dbReference type="PhylomeDB" id="Q14814"/>
<dbReference type="TreeFam" id="TF314067"/>
<dbReference type="PathwayCommons" id="Q14814"/>
<dbReference type="Reactome" id="R-HSA-2151201">
    <property type="pathway name" value="Transcriptional activation of mitochondrial biogenesis"/>
</dbReference>
<dbReference type="Reactome" id="R-HSA-400253">
    <property type="pathway name" value="Circadian Clock"/>
</dbReference>
<dbReference type="Reactome" id="R-HSA-525793">
    <property type="pathway name" value="Myogenesis"/>
</dbReference>
<dbReference type="Reactome" id="R-HSA-9031628">
    <property type="pathway name" value="NGF-stimulated transcription"/>
</dbReference>
<dbReference type="Reactome" id="R-HSA-9707616">
    <property type="pathway name" value="Heme signaling"/>
</dbReference>
<dbReference type="SignaLink" id="Q14814"/>
<dbReference type="SIGNOR" id="Q14814"/>
<dbReference type="BioGRID-ORCS" id="4209">
    <property type="hits" value="52 hits in 1172 CRISPR screens"/>
</dbReference>
<dbReference type="ChiTaRS" id="MEF2D">
    <property type="organism name" value="human"/>
</dbReference>
<dbReference type="GeneWiki" id="MEF2D"/>
<dbReference type="GenomeRNAi" id="4209"/>
<dbReference type="Pharos" id="Q14814">
    <property type="development level" value="Tbio"/>
</dbReference>
<dbReference type="PRO" id="PR:Q14814"/>
<dbReference type="Proteomes" id="UP000005640">
    <property type="component" value="Chromosome 1"/>
</dbReference>
<dbReference type="RNAct" id="Q14814">
    <property type="molecule type" value="protein"/>
</dbReference>
<dbReference type="Bgee" id="ENSG00000116604">
    <property type="expression patterns" value="Expressed in hindlimb stylopod muscle and 192 other cell types or tissues"/>
</dbReference>
<dbReference type="ExpressionAtlas" id="Q14814">
    <property type="expression patterns" value="baseline and differential"/>
</dbReference>
<dbReference type="GO" id="GO:0000785">
    <property type="term" value="C:chromatin"/>
    <property type="evidence" value="ECO:0000247"/>
    <property type="project" value="NTNU_SB"/>
</dbReference>
<dbReference type="GO" id="GO:0043231">
    <property type="term" value="C:intracellular membrane-bounded organelle"/>
    <property type="evidence" value="ECO:0000314"/>
    <property type="project" value="HPA"/>
</dbReference>
<dbReference type="GO" id="GO:0005654">
    <property type="term" value="C:nucleoplasm"/>
    <property type="evidence" value="ECO:0000314"/>
    <property type="project" value="HPA"/>
</dbReference>
<dbReference type="GO" id="GO:0005634">
    <property type="term" value="C:nucleus"/>
    <property type="evidence" value="ECO:0000314"/>
    <property type="project" value="UniProtKB"/>
</dbReference>
<dbReference type="GO" id="GO:0003700">
    <property type="term" value="F:DNA-binding transcription factor activity"/>
    <property type="evidence" value="ECO:0000303"/>
    <property type="project" value="ProtInc"/>
</dbReference>
<dbReference type="GO" id="GO:0000981">
    <property type="term" value="F:DNA-binding transcription factor activity, RNA polymerase II-specific"/>
    <property type="evidence" value="ECO:0000314"/>
    <property type="project" value="UniProtKB"/>
</dbReference>
<dbReference type="GO" id="GO:0140297">
    <property type="term" value="F:DNA-binding transcription factor binding"/>
    <property type="evidence" value="ECO:0000353"/>
    <property type="project" value="UniProtKB"/>
</dbReference>
<dbReference type="GO" id="GO:0042826">
    <property type="term" value="F:histone deacetylase binding"/>
    <property type="evidence" value="ECO:0000353"/>
    <property type="project" value="UniProtKB"/>
</dbReference>
<dbReference type="GO" id="GO:0046983">
    <property type="term" value="F:protein dimerization activity"/>
    <property type="evidence" value="ECO:0007669"/>
    <property type="project" value="InterPro"/>
</dbReference>
<dbReference type="GO" id="GO:0000978">
    <property type="term" value="F:RNA polymerase II cis-regulatory region sequence-specific DNA binding"/>
    <property type="evidence" value="ECO:0000318"/>
    <property type="project" value="GO_Central"/>
</dbReference>
<dbReference type="GO" id="GO:0000977">
    <property type="term" value="F:RNA polymerase II transcription regulatory region sequence-specific DNA binding"/>
    <property type="evidence" value="ECO:0000314"/>
    <property type="project" value="UniProtKB"/>
</dbReference>
<dbReference type="GO" id="GO:0061629">
    <property type="term" value="F:RNA polymerase II-specific DNA-binding transcription factor binding"/>
    <property type="evidence" value="ECO:0000353"/>
    <property type="project" value="BHF-UCL"/>
</dbReference>
<dbReference type="GO" id="GO:1990837">
    <property type="term" value="F:sequence-specific double-stranded DNA binding"/>
    <property type="evidence" value="ECO:0000314"/>
    <property type="project" value="ARUK-UCL"/>
</dbReference>
<dbReference type="GO" id="GO:0007512">
    <property type="term" value="P:adult heart development"/>
    <property type="evidence" value="ECO:0000270"/>
    <property type="project" value="UniProtKB"/>
</dbReference>
<dbReference type="GO" id="GO:0006915">
    <property type="term" value="P:apoptotic process"/>
    <property type="evidence" value="ECO:0007669"/>
    <property type="project" value="UniProtKB-KW"/>
</dbReference>
<dbReference type="GO" id="GO:0030154">
    <property type="term" value="P:cell differentiation"/>
    <property type="evidence" value="ECO:0000318"/>
    <property type="project" value="GO_Central"/>
</dbReference>
<dbReference type="GO" id="GO:0007517">
    <property type="term" value="P:muscle organ development"/>
    <property type="evidence" value="ECO:0000304"/>
    <property type="project" value="ProtInc"/>
</dbReference>
<dbReference type="GO" id="GO:0007399">
    <property type="term" value="P:nervous system development"/>
    <property type="evidence" value="ECO:0007669"/>
    <property type="project" value="UniProtKB-KW"/>
</dbReference>
<dbReference type="GO" id="GO:0045944">
    <property type="term" value="P:positive regulation of transcription by RNA polymerase II"/>
    <property type="evidence" value="ECO:0000314"/>
    <property type="project" value="UniProtKB"/>
</dbReference>
<dbReference type="GO" id="GO:1904707">
    <property type="term" value="P:positive regulation of vascular associated smooth muscle cell proliferation"/>
    <property type="evidence" value="ECO:0000316"/>
    <property type="project" value="BHF-UCL"/>
</dbReference>
<dbReference type="CDD" id="cd00265">
    <property type="entry name" value="MADS_MEF2_like"/>
    <property type="match status" value="1"/>
</dbReference>
<dbReference type="FunFam" id="3.40.1810.10:FF:000001">
    <property type="entry name" value="Myocyte-specific enhancer factor 2A homolog"/>
    <property type="match status" value="1"/>
</dbReference>
<dbReference type="Gene3D" id="3.40.1810.10">
    <property type="entry name" value="Transcription factor, MADS-box"/>
    <property type="match status" value="1"/>
</dbReference>
<dbReference type="InterPro" id="IPR022102">
    <property type="entry name" value="HJURP_C"/>
</dbReference>
<dbReference type="InterPro" id="IPR033896">
    <property type="entry name" value="MEF2-like_N"/>
</dbReference>
<dbReference type="InterPro" id="IPR002100">
    <property type="entry name" value="TF_MADSbox"/>
</dbReference>
<dbReference type="InterPro" id="IPR036879">
    <property type="entry name" value="TF_MADSbox_sf"/>
</dbReference>
<dbReference type="PANTHER" id="PTHR11945">
    <property type="entry name" value="MADS BOX PROTEIN"/>
    <property type="match status" value="1"/>
</dbReference>
<dbReference type="PANTHER" id="PTHR11945:SF23">
    <property type="entry name" value="MYOCYTE-SPECIFIC ENHANCER FACTOR 2D"/>
    <property type="match status" value="1"/>
</dbReference>
<dbReference type="Pfam" id="PF12347">
    <property type="entry name" value="HJURP_C"/>
    <property type="match status" value="1"/>
</dbReference>
<dbReference type="Pfam" id="PF00319">
    <property type="entry name" value="SRF-TF"/>
    <property type="match status" value="1"/>
</dbReference>
<dbReference type="PRINTS" id="PR00404">
    <property type="entry name" value="MADSDOMAIN"/>
</dbReference>
<dbReference type="SMART" id="SM00432">
    <property type="entry name" value="MADS"/>
    <property type="match status" value="1"/>
</dbReference>
<dbReference type="SUPFAM" id="SSF55455">
    <property type="entry name" value="SRF-like"/>
    <property type="match status" value="1"/>
</dbReference>
<dbReference type="PROSITE" id="PS00350">
    <property type="entry name" value="MADS_BOX_1"/>
    <property type="match status" value="1"/>
</dbReference>
<dbReference type="PROSITE" id="PS50066">
    <property type="entry name" value="MADS_BOX_2"/>
    <property type="match status" value="1"/>
</dbReference>
<evidence type="ECO:0000250" key="1"/>
<evidence type="ECO:0000250" key="2">
    <source>
        <dbReference type="UniProtKB" id="O89038"/>
    </source>
</evidence>
<evidence type="ECO:0000250" key="3">
    <source>
        <dbReference type="UniProtKB" id="Q63943"/>
    </source>
</evidence>
<evidence type="ECO:0000255" key="4"/>
<evidence type="ECO:0000255" key="5">
    <source>
        <dbReference type="PROSITE-ProRule" id="PRU00251"/>
    </source>
</evidence>
<evidence type="ECO:0000256" key="6">
    <source>
        <dbReference type="SAM" id="MobiDB-lite"/>
    </source>
</evidence>
<evidence type="ECO:0000269" key="7">
    <source>
    </source>
</evidence>
<evidence type="ECO:0000269" key="8">
    <source>
    </source>
</evidence>
<evidence type="ECO:0000269" key="9">
    <source>
    </source>
</evidence>
<evidence type="ECO:0000269" key="10">
    <source>
    </source>
</evidence>
<evidence type="ECO:0000269" key="11">
    <source>
    </source>
</evidence>
<evidence type="ECO:0000269" key="12">
    <source>
    </source>
</evidence>
<evidence type="ECO:0000269" key="13">
    <source>
    </source>
</evidence>
<evidence type="ECO:0000269" key="14">
    <source>
    </source>
</evidence>
<evidence type="ECO:0000269" key="15">
    <source>
    </source>
</evidence>
<evidence type="ECO:0000269" key="16">
    <source>
    </source>
</evidence>
<evidence type="ECO:0000269" key="17">
    <source>
    </source>
</evidence>
<evidence type="ECO:0000269" key="18">
    <source>
    </source>
</evidence>
<evidence type="ECO:0000303" key="19">
    <source>
    </source>
</evidence>
<evidence type="ECO:0000303" key="20">
    <source>
    </source>
</evidence>
<evidence type="ECO:0000305" key="21"/>
<evidence type="ECO:0007744" key="22">
    <source>
    </source>
</evidence>
<evidence type="ECO:0007744" key="23">
    <source>
    </source>
</evidence>
<evidence type="ECO:0007744" key="24">
    <source>
    </source>
</evidence>
<evidence type="ECO:0007744" key="25">
    <source>
    </source>
</evidence>
<evidence type="ECO:0007744" key="26">
    <source>
    </source>
</evidence>
<evidence type="ECO:0007744" key="27">
    <source>
    </source>
</evidence>
<evidence type="ECO:0007744" key="28">
    <source>
    </source>
</evidence>
<evidence type="ECO:0007829" key="29">
    <source>
        <dbReference type="PDB" id="8C84"/>
    </source>
</evidence>
<organism>
    <name type="scientific">Homo sapiens</name>
    <name type="common">Human</name>
    <dbReference type="NCBI Taxonomy" id="9606"/>
    <lineage>
        <taxon>Eukaryota</taxon>
        <taxon>Metazoa</taxon>
        <taxon>Chordata</taxon>
        <taxon>Craniata</taxon>
        <taxon>Vertebrata</taxon>
        <taxon>Euteleostomi</taxon>
        <taxon>Mammalia</taxon>
        <taxon>Eutheria</taxon>
        <taxon>Euarchontoglires</taxon>
        <taxon>Primates</taxon>
        <taxon>Haplorrhini</taxon>
        <taxon>Catarrhini</taxon>
        <taxon>Hominidae</taxon>
        <taxon>Homo</taxon>
    </lineage>
</organism>
<comment type="function">
    <text evidence="1 9 10 11 12 14">Transcriptional activator which binds specifically to the MEF2 element, 5'-YTA[AT](4)TAR-3', found in numerous muscle-specific, growth factor- and stress-induced genes. Mediates cellular functions not only in skeletal and cardiac muscle development, but also in neuronal differentiation and survival. Plays diverse roles in the control of cell growth, survival and apoptosis via p38 MAPK signaling in muscle-specific and/or growth factor-related transcription. Plays a critical role in the regulation of neuronal apoptosis (By similarity).</text>
</comment>
<comment type="subunit">
    <text evidence="2 3 7 18">Interacts with MYOG (By similarity). Forms a complex with class II HDACs in undifferentiating cells. On myogenic differentiation, HDACs are released into the cytoplasm allowing MEF2s to interact with other proteins for activation. Interacts with HDAC4 (in undifferentiating cells); the interaction translocates MEF2D to nuclear dots. Forms a heterodimer with MEF2A. Interacts with MAPK7; the interaction phosphorylates but does not activate MEF2D (By similarity). Interacts with CCAR2 and HDAC3.</text>
</comment>
<comment type="subcellular location">
    <subcellularLocation>
        <location evidence="5 11 12">Nucleus</location>
    </subcellularLocation>
    <text>Translocated by HDAC4 to nuclear dots.</text>
</comment>
<comment type="alternative products">
    <event type="alternative splicing"/>
    <isoform>
        <id>Q14814-1</id>
        <name>MEF2DAB</name>
        <sequence type="displayed"/>
    </isoform>
    <isoform>
        <id>Q14814-2</id>
        <name>MEF2DA'B</name>
        <sequence type="described" ref="VSP_006250"/>
    </isoform>
    <isoform>
        <id>Q14814-3</id>
        <name>MEF2D0B</name>
        <sequence type="described" ref="VSP_006251"/>
    </isoform>
    <isoform>
        <id>Q14814-4</id>
        <name>MEF2DA0</name>
        <sequence type="described" ref="VSP_006252"/>
    </isoform>
    <isoform>
        <id>Q14814-5</id>
        <name>MEF2DA'0</name>
        <sequence type="described" ref="VSP_006250 VSP_006252"/>
    </isoform>
    <isoform>
        <id>Q14814-6</id>
        <name>MEF2D00</name>
        <sequence type="described" ref="VSP_006251 VSP_006252"/>
    </isoform>
</comment>
<comment type="developmental stage">
    <text>Present in myotubes and also in undifferentiated myoblasts.</text>
</comment>
<comment type="domain">
    <text>The beta domain, missing in a number of isoforms, is required for enhancement of transcriptional activity.</text>
</comment>
<comment type="PTM">
    <text evidence="8 9 10 11 12 15 16 17">Phosphorylated on Ser-444 by CDK5 is required for Lys-439 sumoylation and inhibits transcriptional activity. In neurons, enhanced CDK5 activity induced by neurotoxins promotes caspase 3-mediated cleavage leading to neuron apoptosis. Phosphorylation on Ser-180 can be enhanced by EGF. Phosphorylated and activated by CaMK4.</text>
</comment>
<comment type="PTM">
    <text evidence="13 16 18">Acetylated on Lys-439 by CREBBP. Acetylated by EP300. Deacetylated by SIRT1 and HDAC3.</text>
</comment>
<comment type="PTM">
    <text evidence="12 16 17">Sumoylated on Lys-439 with SUMO2 but not SUMO1; which inhibits transcriptional activity and myogenic activity. Desumoylated by SENP3.</text>
</comment>
<comment type="PTM">
    <text evidence="1">Proteolytically cleaved in cerebellar granule neurons on several sites by caspase 7 following neurotoxicity. Preferentially cleaves the CDK5-mediated hyperphosphorylated form which leads to neuron apoptosis and transcriptional inactivation (By similarity).</text>
</comment>
<comment type="similarity">
    <text evidence="21">Belongs to the MEF2 family.</text>
</comment>
<comment type="online information" name="Atlas of Genetics and Cytogenetics in Oncology and Haematology">
    <link uri="https://atlasgeneticsoncology.org/gene/43636/MEF2D"/>
</comment>
<reference key="1">
    <citation type="journal article" date="1993" name="Development">
        <title>A fourth human MEF2 transcription factor, hMEF2D, is an early marker of the myogenic lineage.</title>
        <authorList>
            <person name="Breitbart R.E."/>
            <person name="Liang C.-S."/>
            <person name="Smoot L.B."/>
            <person name="Laheru D.A."/>
            <person name="Mahdavi V."/>
            <person name="Nadal-Ginard B."/>
        </authorList>
    </citation>
    <scope>NUCLEOTIDE SEQUENCE [GENOMIC DNA / MRNA] (ISOFORMS MEF2D00; MEF2D0B; MEF2DA'0; MEF2DA'B; MEF2DA0 AND MEF2DAB)</scope>
    <source>
        <tissue>Myocardium</tissue>
    </source>
</reference>
<reference key="2">
    <citation type="journal article" date="2006" name="Nature">
        <title>The DNA sequence and biological annotation of human chromosome 1.</title>
        <authorList>
            <person name="Gregory S.G."/>
            <person name="Barlow K.F."/>
            <person name="McLay K.E."/>
            <person name="Kaul R."/>
            <person name="Swarbreck D."/>
            <person name="Dunham A."/>
            <person name="Scott C.E."/>
            <person name="Howe K.L."/>
            <person name="Woodfine K."/>
            <person name="Spencer C.C.A."/>
            <person name="Jones M.C."/>
            <person name="Gillson C."/>
            <person name="Searle S."/>
            <person name="Zhou Y."/>
            <person name="Kokocinski F."/>
            <person name="McDonald L."/>
            <person name="Evans R."/>
            <person name="Phillips K."/>
            <person name="Atkinson A."/>
            <person name="Cooper R."/>
            <person name="Jones C."/>
            <person name="Hall R.E."/>
            <person name="Andrews T.D."/>
            <person name="Lloyd C."/>
            <person name="Ainscough R."/>
            <person name="Almeida J.P."/>
            <person name="Ambrose K.D."/>
            <person name="Anderson F."/>
            <person name="Andrew R.W."/>
            <person name="Ashwell R.I.S."/>
            <person name="Aubin K."/>
            <person name="Babbage A.K."/>
            <person name="Bagguley C.L."/>
            <person name="Bailey J."/>
            <person name="Beasley H."/>
            <person name="Bethel G."/>
            <person name="Bird C.P."/>
            <person name="Bray-Allen S."/>
            <person name="Brown J.Y."/>
            <person name="Brown A.J."/>
            <person name="Buckley D."/>
            <person name="Burton J."/>
            <person name="Bye J."/>
            <person name="Carder C."/>
            <person name="Chapman J.C."/>
            <person name="Clark S.Y."/>
            <person name="Clarke G."/>
            <person name="Clee C."/>
            <person name="Cobley V."/>
            <person name="Collier R.E."/>
            <person name="Corby N."/>
            <person name="Coville G.J."/>
            <person name="Davies J."/>
            <person name="Deadman R."/>
            <person name="Dunn M."/>
            <person name="Earthrowl M."/>
            <person name="Ellington A.G."/>
            <person name="Errington H."/>
            <person name="Frankish A."/>
            <person name="Frankland J."/>
            <person name="French L."/>
            <person name="Garner P."/>
            <person name="Garnett J."/>
            <person name="Gay L."/>
            <person name="Ghori M.R.J."/>
            <person name="Gibson R."/>
            <person name="Gilby L.M."/>
            <person name="Gillett W."/>
            <person name="Glithero R.J."/>
            <person name="Grafham D.V."/>
            <person name="Griffiths C."/>
            <person name="Griffiths-Jones S."/>
            <person name="Grocock R."/>
            <person name="Hammond S."/>
            <person name="Harrison E.S.I."/>
            <person name="Hart E."/>
            <person name="Haugen E."/>
            <person name="Heath P.D."/>
            <person name="Holmes S."/>
            <person name="Holt K."/>
            <person name="Howden P.J."/>
            <person name="Hunt A.R."/>
            <person name="Hunt S.E."/>
            <person name="Hunter G."/>
            <person name="Isherwood J."/>
            <person name="James R."/>
            <person name="Johnson C."/>
            <person name="Johnson D."/>
            <person name="Joy A."/>
            <person name="Kay M."/>
            <person name="Kershaw J.K."/>
            <person name="Kibukawa M."/>
            <person name="Kimberley A.M."/>
            <person name="King A."/>
            <person name="Knights A.J."/>
            <person name="Lad H."/>
            <person name="Laird G."/>
            <person name="Lawlor S."/>
            <person name="Leongamornlert D.A."/>
            <person name="Lloyd D.M."/>
            <person name="Loveland J."/>
            <person name="Lovell J."/>
            <person name="Lush M.J."/>
            <person name="Lyne R."/>
            <person name="Martin S."/>
            <person name="Mashreghi-Mohammadi M."/>
            <person name="Matthews L."/>
            <person name="Matthews N.S.W."/>
            <person name="McLaren S."/>
            <person name="Milne S."/>
            <person name="Mistry S."/>
            <person name="Moore M.J.F."/>
            <person name="Nickerson T."/>
            <person name="O'Dell C.N."/>
            <person name="Oliver K."/>
            <person name="Palmeiri A."/>
            <person name="Palmer S.A."/>
            <person name="Parker A."/>
            <person name="Patel D."/>
            <person name="Pearce A.V."/>
            <person name="Peck A.I."/>
            <person name="Pelan S."/>
            <person name="Phelps K."/>
            <person name="Phillimore B.J."/>
            <person name="Plumb R."/>
            <person name="Rajan J."/>
            <person name="Raymond C."/>
            <person name="Rouse G."/>
            <person name="Saenphimmachak C."/>
            <person name="Sehra H.K."/>
            <person name="Sheridan E."/>
            <person name="Shownkeen R."/>
            <person name="Sims S."/>
            <person name="Skuce C.D."/>
            <person name="Smith M."/>
            <person name="Steward C."/>
            <person name="Subramanian S."/>
            <person name="Sycamore N."/>
            <person name="Tracey A."/>
            <person name="Tromans A."/>
            <person name="Van Helmond Z."/>
            <person name="Wall M."/>
            <person name="Wallis J.M."/>
            <person name="White S."/>
            <person name="Whitehead S.L."/>
            <person name="Wilkinson J.E."/>
            <person name="Willey D.L."/>
            <person name="Williams H."/>
            <person name="Wilming L."/>
            <person name="Wray P.W."/>
            <person name="Wu Z."/>
            <person name="Coulson A."/>
            <person name="Vaudin M."/>
            <person name="Sulston J.E."/>
            <person name="Durbin R.M."/>
            <person name="Hubbard T."/>
            <person name="Wooster R."/>
            <person name="Dunham I."/>
            <person name="Carter N.P."/>
            <person name="McVean G."/>
            <person name="Ross M.T."/>
            <person name="Harrow J."/>
            <person name="Olson M.V."/>
            <person name="Beck S."/>
            <person name="Rogers J."/>
            <person name="Bentley D.R."/>
        </authorList>
    </citation>
    <scope>NUCLEOTIDE SEQUENCE [LARGE SCALE GENOMIC DNA]</scope>
</reference>
<reference key="3">
    <citation type="submission" date="2005-09" db="EMBL/GenBank/DDBJ databases">
        <authorList>
            <person name="Mural R.J."/>
            <person name="Istrail S."/>
            <person name="Sutton G.G."/>
            <person name="Florea L."/>
            <person name="Halpern A.L."/>
            <person name="Mobarry C.M."/>
            <person name="Lippert R."/>
            <person name="Walenz B."/>
            <person name="Shatkay H."/>
            <person name="Dew I."/>
            <person name="Miller J.R."/>
            <person name="Flanigan M.J."/>
            <person name="Edwards N.J."/>
            <person name="Bolanos R."/>
            <person name="Fasulo D."/>
            <person name="Halldorsson B.V."/>
            <person name="Hannenhalli S."/>
            <person name="Turner R."/>
            <person name="Yooseph S."/>
            <person name="Lu F."/>
            <person name="Nusskern D.R."/>
            <person name="Shue B.C."/>
            <person name="Zheng X.H."/>
            <person name="Zhong F."/>
            <person name="Delcher A.L."/>
            <person name="Huson D.H."/>
            <person name="Kravitz S.A."/>
            <person name="Mouchard L."/>
            <person name="Reinert K."/>
            <person name="Remington K.A."/>
            <person name="Clark A.G."/>
            <person name="Waterman M.S."/>
            <person name="Eichler E.E."/>
            <person name="Adams M.D."/>
            <person name="Hunkapiller M.W."/>
            <person name="Myers E.W."/>
            <person name="Venter J.C."/>
        </authorList>
    </citation>
    <scope>NUCLEOTIDE SEQUENCE [LARGE SCALE GENOMIC DNA]</scope>
</reference>
<reference key="4">
    <citation type="journal article" date="2004" name="Genome Res.">
        <title>The status, quality, and expansion of the NIH full-length cDNA project: the Mammalian Gene Collection (MGC).</title>
        <authorList>
            <consortium name="The MGC Project Team"/>
        </authorList>
    </citation>
    <scope>NUCLEOTIDE SEQUENCE [LARGE SCALE MRNA] (ISOFORMS MEF2DA0 AND MEF2DAB)</scope>
    <source>
        <tissue>Eye</tissue>
        <tissue>Testis</tissue>
    </source>
</reference>
<reference key="5">
    <citation type="journal article" date="1999" name="Mol. Cell. Biol.">
        <title>Regulation of the MEF2 family of transcription factors by p38.</title>
        <authorList>
            <person name="Zhao M."/>
            <person name="New L."/>
            <person name="Kravchenko V.V."/>
            <person name="Kato Y."/>
            <person name="Gram H."/>
            <person name="di Padova F."/>
            <person name="Olson E.N."/>
            <person name="Ulevitch R.J."/>
            <person name="Han J.-D."/>
        </authorList>
    </citation>
    <scope>HETERODIMERIZATION</scope>
</reference>
<reference key="6">
    <citation type="journal article" date="1999" name="Mol. Cell. Biol.">
        <title>HDAC4, a human histone deacetylase related to yeast HDA1, is a transcriptional corepressor.</title>
        <authorList>
            <person name="Wang A.H."/>
            <person name="Bertos N.R."/>
            <person name="Vezmar M."/>
            <person name="Pelletier N."/>
            <person name="Crosato M."/>
            <person name="Heng H.H."/>
            <person name="Th'ng J."/>
            <person name="Han J."/>
            <person name="Yang X.-J."/>
        </authorList>
    </citation>
    <scope>INTERACTION WITH HDAC4</scope>
</reference>
<reference key="7">
    <citation type="journal article" date="2000" name="J. Biol. Chem.">
        <title>Big mitogen-activated kinase regulates multiple members of the MEF2 protein family.</title>
        <authorList>
            <person name="Kato Y."/>
            <person name="Zhao M."/>
            <person name="Morikawa A."/>
            <person name="Sugiyama T."/>
            <person name="Chakravortty D."/>
            <person name="Koide N."/>
            <person name="Yoshida T."/>
            <person name="Tapping R.I."/>
            <person name="Yang Y."/>
            <person name="Yokochi T."/>
            <person name="Lee J.D."/>
        </authorList>
    </citation>
    <scope>PHOSPHORYLATION AT SER-180</scope>
    <scope>FUNCTION</scope>
    <scope>MUTAGENESIS OF SER-180 AND SER-437</scope>
</reference>
<reference key="8">
    <citation type="journal article" date="2000" name="J. Biol. Chem.">
        <title>Ca(2+)-dependent gene expression mediated by MEF2 transcription factors.</title>
        <authorList>
            <person name="Blaeser F."/>
            <person name="Ho N."/>
            <person name="Prywes R."/>
            <person name="Chatila T.A."/>
        </authorList>
    </citation>
    <scope>PHOSPHORYLATION BY CAMK4</scope>
</reference>
<reference key="9">
    <citation type="journal article" date="2002" name="Proc. Natl. Acad. Sci. U.S.A.">
        <title>Dominant-interfering forms of MEF2 generated by caspase cleavage contribute to NMDA-induced neuronal apoptosis.</title>
        <authorList>
            <person name="Okamoto S."/>
            <person name="Li Z."/>
            <person name="Ju C."/>
            <person name="Scholzke M.N."/>
            <person name="Mathews E."/>
            <person name="Cui J."/>
            <person name="Salvesen G.S."/>
            <person name="Bossy-Wetzel E."/>
            <person name="Lipton S.A."/>
        </authorList>
    </citation>
    <scope>PROTEOLYTIC PROCESSING AT ASP-288</scope>
    <scope>FUNCTION</scope>
    <scope>MUTAGENESIS OF ASP-288</scope>
</reference>
<reference key="10">
    <citation type="journal article" date="2003" name="Neuron">
        <title>Cdk5-mediated inhibition of the protective effects of transcription factor MEF2 in neurotoxicity-induced apoptosis.</title>
        <authorList>
            <person name="Gong X."/>
            <person name="Tang X."/>
            <person name="Wiedmann M."/>
            <person name="Wang X."/>
            <person name="Peng J."/>
            <person name="Zheng D."/>
            <person name="Blair L.A.C."/>
            <person name="Marshall J."/>
            <person name="Mao Z."/>
        </authorList>
    </citation>
    <scope>PHOSPHORYLATION AT SER-444</scope>
    <scope>FUNCTION</scope>
    <scope>SUBCELLULAR LOCATION</scope>
    <scope>MUTAGENESIS OF SER-444</scope>
</reference>
<reference key="11">
    <citation type="journal article" date="2005" name="J. Biol. Chem.">
        <title>Alternative pre-mRNA splicing governs expression of a conserved acidic transactivation domain in myocyte enhancer factor 2 factors of striated muscle and brain.</title>
        <authorList>
            <person name="Zhu B."/>
            <person name="Ramachandran B."/>
            <person name="Gulick T."/>
        </authorList>
    </citation>
    <scope>FUNCTION OF BETA DOMAIN</scope>
    <scope>MUTAGENESIS OF THR-286; GLU-287; ASP-288; HIS-289 AND ASP-291</scope>
</reference>
<reference key="12">
    <citation type="journal article" date="2005" name="J. Neurosci.">
        <title>Cyclin-dependent kinase 5 mediates neurotoxin-induced degradation of the transcription factor myocyte enhancer factor 2.</title>
        <authorList>
            <person name="Tang X."/>
            <person name="Wang X."/>
            <person name="Gong X."/>
            <person name="Tong M."/>
            <person name="Park D."/>
            <person name="Xia Z."/>
            <person name="Mao Z."/>
        </authorList>
    </citation>
    <scope>PROTEOLYTIC PROCESSING</scope>
    <scope>PHOSPHORYLATION AT SER-444</scope>
    <scope>MUTAGENESIS OF SER-444</scope>
</reference>
<reference key="13">
    <citation type="journal article" date="2005" name="Mol. Cell. Biol.">
        <title>Association with class IIa histone deacetylases upregulates the sumoylation of MEF2 transcription factors.</title>
        <authorList>
            <person name="Gregoire S."/>
            <person name="Yang X.-J."/>
        </authorList>
    </citation>
    <scope>SUMOYLATION AT LYS-439</scope>
    <scope>SUBCELLULAR LOCATION</scope>
    <scope>FUNCTION</scope>
</reference>
<reference key="14">
    <citation type="journal article" date="2005" name="Mol. Cell. Biol.">
        <title>Regulation of MEF2 by histone deacetylase 4- and SIRT1 deacetylase-mediated lysine modifications.</title>
        <authorList>
            <person name="Zhao X."/>
            <person name="Sternsdorf T."/>
            <person name="Bolger T.A."/>
            <person name="Evans R.M."/>
            <person name="Yao T.-P."/>
        </authorList>
    </citation>
    <scope>SUMOYLATION AT LYS-439</scope>
    <scope>ACETYLATION AT LYS-439</scope>
    <scope>DEACETYLATION</scope>
    <scope>MUTAGENESIS OF ILE-438 AND LYS-439</scope>
</reference>
<reference key="15">
    <citation type="journal article" date="2005" name="Mol. Cell. Biol.">
        <title>Myocyte enhancer factor 2 acetylation by p300 enhances its DNA binding activity, transcriptional activity, and myogenic differentiation.</title>
        <authorList>
            <person name="Ma K."/>
            <person name="Chan J.K."/>
            <person name="Zhu G."/>
            <person name="Wu Z."/>
        </authorList>
    </citation>
    <scope>ACETYLATION</scope>
</reference>
<reference key="16">
    <citation type="journal article" date="2006" name="J. Biol. Chem.">
        <title>Control of MEF2 transcriptional activity by coordinated phosphorylation and sumoylation.</title>
        <authorList>
            <person name="Gregoire S."/>
            <person name="Tremblay A.M."/>
            <person name="Xiao L."/>
            <person name="Yang Q."/>
            <person name="Ma K."/>
            <person name="Nie J."/>
            <person name="Mao Z."/>
            <person name="Wu Z."/>
            <person name="Giguere V."/>
            <person name="Yang X.-J."/>
        </authorList>
    </citation>
    <scope>SUMOYLATION AT LYS-439</scope>
    <scope>PHOSPHORYLATION AT SER-444</scope>
    <scope>MUTAGENESIS OF LYS-439 AND SER-444</scope>
</reference>
<reference key="17">
    <citation type="journal article" date="2006" name="Nat. Biotechnol.">
        <title>A probability-based approach for high-throughput protein phosphorylation analysis and site localization.</title>
        <authorList>
            <person name="Beausoleil S.A."/>
            <person name="Villen J."/>
            <person name="Gerber S.A."/>
            <person name="Rush J."/>
            <person name="Gygi S.P."/>
        </authorList>
    </citation>
    <scope>PHOSPHORYLATION [LARGE SCALE ANALYSIS] AT SER-180</scope>
    <scope>IDENTIFICATION BY MASS SPECTROMETRY [LARGE SCALE ANALYSIS]</scope>
    <source>
        <tissue>Cervix carcinoma</tissue>
    </source>
</reference>
<reference key="18">
    <citation type="journal article" date="2008" name="Mol. Cell">
        <title>Kinase-selective enrichment enables quantitative phosphoproteomics of the kinome across the cell cycle.</title>
        <authorList>
            <person name="Daub H."/>
            <person name="Olsen J.V."/>
            <person name="Bairlein M."/>
            <person name="Gnad F."/>
            <person name="Oppermann F.S."/>
            <person name="Korner R."/>
            <person name="Greff Z."/>
            <person name="Keri G."/>
            <person name="Stemmann O."/>
            <person name="Mann M."/>
        </authorList>
    </citation>
    <scope>PHOSPHORYLATION [LARGE SCALE ANALYSIS] AT SER-180</scope>
    <scope>IDENTIFICATION BY MASS SPECTROMETRY [LARGE SCALE ANALYSIS]</scope>
    <source>
        <tissue>Cervix carcinoma</tissue>
    </source>
</reference>
<reference key="19">
    <citation type="journal article" date="2008" name="Proc. Natl. Acad. Sci. U.S.A.">
        <title>A quantitative atlas of mitotic phosphorylation.</title>
        <authorList>
            <person name="Dephoure N."/>
            <person name="Zhou C."/>
            <person name="Villen J."/>
            <person name="Beausoleil S.A."/>
            <person name="Bakalarski C.E."/>
            <person name="Elledge S.J."/>
            <person name="Gygi S.P."/>
        </authorList>
    </citation>
    <scope>PHOSPHORYLATION [LARGE SCALE ANALYSIS] AT SER-231 AND SER-251</scope>
    <scope>IDENTIFICATION BY MASS SPECTROMETRY [LARGE SCALE ANALYSIS]</scope>
    <source>
        <tissue>Cervix carcinoma</tissue>
    </source>
</reference>
<reference key="20">
    <citation type="journal article" date="2009" name="Anal. Chem.">
        <title>Lys-N and trypsin cover complementary parts of the phosphoproteome in a refined SCX-based approach.</title>
        <authorList>
            <person name="Gauci S."/>
            <person name="Helbig A.O."/>
            <person name="Slijper M."/>
            <person name="Krijgsveld J."/>
            <person name="Heck A.J."/>
            <person name="Mohammed S."/>
        </authorList>
    </citation>
    <scope>IDENTIFICATION BY MASS SPECTROMETRY [LARGE SCALE ANALYSIS]</scope>
</reference>
<reference key="21">
    <citation type="journal article" date="2009" name="Science">
        <title>Lysine acetylation targets protein complexes and co-regulates major cellular functions.</title>
        <authorList>
            <person name="Choudhary C."/>
            <person name="Kumar C."/>
            <person name="Gnad F."/>
            <person name="Nielsen M.L."/>
            <person name="Rehman M."/>
            <person name="Walther T.C."/>
            <person name="Olsen J.V."/>
            <person name="Mann M."/>
        </authorList>
    </citation>
    <scope>ACETYLATION [LARGE SCALE ANALYSIS] AT LYS-245</scope>
    <scope>IDENTIFICATION BY MASS SPECTROMETRY [LARGE SCALE ANALYSIS]</scope>
</reference>
<reference key="22">
    <citation type="journal article" date="2010" name="J. Biol. Chem.">
        <title>HDAC3 is negatively regulated by the nuclear protein DBC1.</title>
        <authorList>
            <person name="Chini C.C."/>
            <person name="Escande C."/>
            <person name="Nin V."/>
            <person name="Chini E.N."/>
        </authorList>
    </citation>
    <scope>INTERACTION WITH CCAR2 AND HDAC3</scope>
    <scope>ACETYLATION</scope>
    <scope>DEACETYLATION</scope>
</reference>
<reference key="23">
    <citation type="journal article" date="2010" name="Sci. Signal.">
        <title>Quantitative phosphoproteomics reveals widespread full phosphorylation site occupancy during mitosis.</title>
        <authorList>
            <person name="Olsen J.V."/>
            <person name="Vermeulen M."/>
            <person name="Santamaria A."/>
            <person name="Kumar C."/>
            <person name="Miller M.L."/>
            <person name="Jensen L.J."/>
            <person name="Gnad F."/>
            <person name="Cox J."/>
            <person name="Jensen T.S."/>
            <person name="Nigg E.A."/>
            <person name="Brunak S."/>
            <person name="Mann M."/>
        </authorList>
    </citation>
    <scope>PHOSPHORYLATION [LARGE SCALE ANALYSIS] AT SER-180</scope>
    <scope>IDENTIFICATION BY MASS SPECTROMETRY [LARGE SCALE ANALYSIS]</scope>
    <source>
        <tissue>Cervix carcinoma</tissue>
    </source>
</reference>
<reference key="24">
    <citation type="journal article" date="2011" name="BMC Syst. Biol.">
        <title>Initial characterization of the human central proteome.</title>
        <authorList>
            <person name="Burkard T.R."/>
            <person name="Planyavsky M."/>
            <person name="Kaupe I."/>
            <person name="Breitwieser F.P."/>
            <person name="Buerckstuemmer T."/>
            <person name="Bennett K.L."/>
            <person name="Superti-Furga G."/>
            <person name="Colinge J."/>
        </authorList>
    </citation>
    <scope>IDENTIFICATION BY MASS SPECTROMETRY [LARGE SCALE ANALYSIS]</scope>
</reference>
<reference key="25">
    <citation type="journal article" date="2013" name="J. Proteome Res.">
        <title>Toward a comprehensive characterization of a human cancer cell phosphoproteome.</title>
        <authorList>
            <person name="Zhou H."/>
            <person name="Di Palma S."/>
            <person name="Preisinger C."/>
            <person name="Peng M."/>
            <person name="Polat A.N."/>
            <person name="Heck A.J."/>
            <person name="Mohammed S."/>
        </authorList>
    </citation>
    <scope>PHOSPHORYLATION [LARGE SCALE ANALYSIS] AT SER-121; SER-180; SER-231 AND SER-251</scope>
    <scope>IDENTIFICATION BY MASS SPECTROMETRY [LARGE SCALE ANALYSIS]</scope>
    <source>
        <tissue>Cervix carcinoma</tissue>
        <tissue>Erythroleukemia</tissue>
    </source>
</reference>
<reference key="26">
    <citation type="journal article" date="2014" name="J. Proteomics">
        <title>An enzyme assisted RP-RPLC approach for in-depth analysis of human liver phosphoproteome.</title>
        <authorList>
            <person name="Bian Y."/>
            <person name="Song C."/>
            <person name="Cheng K."/>
            <person name="Dong M."/>
            <person name="Wang F."/>
            <person name="Huang J."/>
            <person name="Sun D."/>
            <person name="Wang L."/>
            <person name="Ye M."/>
            <person name="Zou H."/>
        </authorList>
    </citation>
    <scope>PHOSPHORYLATION [LARGE SCALE ANALYSIS] AT SER-251</scope>
    <scope>IDENTIFICATION BY MASS SPECTROMETRY [LARGE SCALE ANALYSIS]</scope>
    <source>
        <tissue>Liver</tissue>
    </source>
</reference>
<accession>Q14814</accession>
<accession>D3DVC0</accession>
<accession>Q14815</accession>
<accession>Q5T9U5</accession>
<accession>Q5T9U6</accession>
<sequence>MGRKKIQIQRITDERNRQVTFTKRKFGLMKKAYELSVLCDCEIALIIFNHSNKLFQYASTDMDKVLLKYTEYNEPHESRTNADIIETLRKKGFNGCDSPEPDGEDSLEQSPLLEDKYRRASEELDGLFRRYGSTVPAPNFAMPVTVPVSNQSSLQFSNPSGSLVTPSLVTSSLTDPRLLSPQQPALQRNSVSPGLPQRPASAGAMLGGDLNSANGACPSPVGNGYVSARASPGLLPVANGNSLNKVIPAKSPPPPTHSTQLGAPSRKPDLRVITSQAGKGLMHHLTEDHLDLNNAQRLGVSQSTHSLTTPVVSVATPSLLSQGLPFSSMPTAYNTDYQLTSAELSSLPAFSSPGGLSLGNVTAWQQPQQPQQPQQPQPPQQQPPQPQQPQPQQPQQPQQPPQQQSHLVPVSLSNLIPGSPLPHVGAALTVTTHPHISIKSEPVSPSRERSPAPPPPAVFPAARPEPGDGLSSPAGGSYETGDRDDGRGDFGPTLGLLRPAPEPEAEGSAVKRMRLDTWTLK</sequence>
<gene>
    <name type="primary">MEF2D</name>
</gene>
<keyword id="KW-0002">3D-structure</keyword>
<keyword id="KW-0007">Acetylation</keyword>
<keyword id="KW-0010">Activator</keyword>
<keyword id="KW-0025">Alternative splicing</keyword>
<keyword id="KW-0053">Apoptosis</keyword>
<keyword id="KW-0217">Developmental protein</keyword>
<keyword id="KW-0221">Differentiation</keyword>
<keyword id="KW-0238">DNA-binding</keyword>
<keyword id="KW-1017">Isopeptide bond</keyword>
<keyword id="KW-0524">Neurogenesis</keyword>
<keyword id="KW-0539">Nucleus</keyword>
<keyword id="KW-0597">Phosphoprotein</keyword>
<keyword id="KW-1267">Proteomics identification</keyword>
<keyword id="KW-1185">Reference proteome</keyword>
<keyword id="KW-0804">Transcription</keyword>
<keyword id="KW-0805">Transcription regulation</keyword>
<keyword id="KW-0832">Ubl conjugation</keyword>
<proteinExistence type="evidence at protein level"/>
<name>MEF2D_HUMAN</name>
<feature type="chain" id="PRO_0000199435" description="Myocyte-specific enhancer factor 2D">
    <location>
        <begin position="1"/>
        <end position="521"/>
    </location>
</feature>
<feature type="domain" description="MADS-box" evidence="5">
    <location>
        <begin position="3"/>
        <end position="57"/>
    </location>
</feature>
<feature type="DNA-binding region" description="Mef2-type" evidence="4">
    <location>
        <begin position="58"/>
        <end position="86"/>
    </location>
</feature>
<feature type="region of interest" description="Disordered" evidence="6">
    <location>
        <begin position="174"/>
        <end position="207"/>
    </location>
</feature>
<feature type="region of interest" description="Disordered" evidence="6">
    <location>
        <begin position="244"/>
        <end position="266"/>
    </location>
</feature>
<feature type="region of interest" description="Beta domain">
    <location>
        <begin position="286"/>
        <end position="292"/>
    </location>
</feature>
<feature type="region of interest" description="Disordered" evidence="6">
    <location>
        <begin position="357"/>
        <end position="407"/>
    </location>
</feature>
<feature type="region of interest" description="Disordered" evidence="6">
    <location>
        <begin position="437"/>
        <end position="521"/>
    </location>
</feature>
<feature type="compositionally biased region" description="Polar residues" evidence="6">
    <location>
        <begin position="180"/>
        <end position="192"/>
    </location>
</feature>
<feature type="compositionally biased region" description="Pro residues" evidence="6">
    <location>
        <begin position="373"/>
        <end position="400"/>
    </location>
</feature>
<feature type="site" description="Cleavage" evidence="21">
    <location>
        <begin position="288"/>
        <end position="289"/>
    </location>
</feature>
<feature type="modified residue" description="Phosphoserine" evidence="3">
    <location>
        <position position="98"/>
    </location>
</feature>
<feature type="modified residue" description="Phosphoserine" evidence="3">
    <location>
        <position position="106"/>
    </location>
</feature>
<feature type="modified residue" description="Phosphoserine" evidence="3">
    <location>
        <position position="110"/>
    </location>
</feature>
<feature type="modified residue" description="Phosphoserine; by PKA" evidence="8 27">
    <location>
        <position position="121"/>
    </location>
</feature>
<feature type="modified residue" description="Phosphoserine; by MAPK7" evidence="9 22 24 26 27">
    <location>
        <position position="180"/>
    </location>
</feature>
<feature type="modified residue" description="Phosphoserine; by PKA" evidence="3">
    <location>
        <position position="190"/>
    </location>
</feature>
<feature type="modified residue" description="Phosphoserine" evidence="23 27">
    <location>
        <position position="231"/>
    </location>
</feature>
<feature type="modified residue" description="N6-acetyllysine" evidence="25">
    <location>
        <position position="245"/>
    </location>
</feature>
<feature type="modified residue" description="Phosphoserine" evidence="23 27 28">
    <location>
        <position position="251"/>
    </location>
</feature>
<feature type="modified residue" description="N6-acetyllysine; alternate" evidence="16">
    <location>
        <position position="439"/>
    </location>
</feature>
<feature type="modified residue" description="Phosphoserine" evidence="11 15 17">
    <location>
        <position position="444"/>
    </location>
</feature>
<feature type="cross-link" description="Glycyl lysine isopeptide (Lys-Gly) (interchain with G-Cter in SUMO); alternate">
    <location>
        <position position="439"/>
    </location>
</feature>
<feature type="splice variant" id="VSP_006251" description="In isoform MEF2D0B and isoform MEF2D00." evidence="20">
    <location>
        <begin position="87"/>
        <end position="132"/>
    </location>
</feature>
<feature type="splice variant" id="VSP_006250" description="In isoform MEF2DA'B and isoform MEF2DA'0." evidence="20">
    <original>TLRKKGFNGCDSPEPDGEDSLEQSPLLEDKYRRASEELDGLFRRYG</original>
    <variation>ALHKKHRECESPEVDEVFALTPQTEEKYKKIDEEFDKMMQSYRLA</variation>
    <location>
        <begin position="87"/>
        <end position="132"/>
    </location>
</feature>
<feature type="splice variant" id="VSP_006252" description="In isoform MEF2DA0, isoform MEF2DA'0 and isoform MEF2D00." evidence="19 20">
    <location>
        <begin position="286"/>
        <end position="292"/>
    </location>
</feature>
<feature type="sequence variant" id="VAR_022155" description="In dbSNP:rs2274315.">
    <original>P</original>
    <variation>S</variation>
    <location>
        <position position="434"/>
    </location>
</feature>
<feature type="mutagenesis site" description="Abolishes MAPK7- and EGF-mediated transcriptional activation." evidence="9">
    <original>S</original>
    <variation>A</variation>
    <location>
        <position position="180"/>
    </location>
</feature>
<feature type="mutagenesis site" description="Same transcriptional activity as for isoforms with beta domain." evidence="14">
    <original>T</original>
    <variation>A</variation>
    <location>
        <position position="286"/>
    </location>
</feature>
<feature type="mutagenesis site" description="Abolishes transcriptional activity; when associated with N-288 and N-291." evidence="14">
    <original>E</original>
    <variation>Q</variation>
    <location>
        <position position="287"/>
    </location>
</feature>
<feature type="mutagenesis site" description="Abolishes cleavage by caspase 7." evidence="10 14">
    <original>D</original>
    <variation>A</variation>
    <location>
        <position position="288"/>
    </location>
</feature>
<feature type="mutagenesis site" description="Abolishes transcriptional activity; when associated with Q-287 and N-291." evidence="10 14">
    <original>D</original>
    <variation>N</variation>
    <location>
        <position position="288"/>
    </location>
</feature>
<feature type="mutagenesis site" description="Same transcriptional activity as for isoforms with beta domain." evidence="14">
    <original>H</original>
    <variation>A</variation>
    <location>
        <position position="289"/>
    </location>
</feature>
<feature type="mutagenesis site" description="Abolishes transcriptional activity; when associated with Q-287 and N-288." evidence="14">
    <original>D</original>
    <variation>N</variation>
    <location>
        <position position="291"/>
    </location>
</feature>
<feature type="mutagenesis site" description="No effect on MAPK7- or EGF-mediated transcriptional activity." evidence="9">
    <original>S</original>
    <variation>A</variation>
    <location>
        <position position="437"/>
    </location>
</feature>
<feature type="mutagenesis site" description="Abolishes K-439 sumoylation." evidence="16">
    <original>I</original>
    <variation>A</variation>
    <location>
        <position position="438"/>
    </location>
</feature>
<feature type="mutagenesis site" description="Abolishes sumoylation and acetylation." evidence="16 17">
    <original>K</original>
    <variation>R</variation>
    <location>
        <position position="439"/>
    </location>
</feature>
<feature type="mutagenesis site" description="Abolishes K-439 sumoylation. Reduced neurotoxin-induced apoptosis of neuronal cells. More resistant to degradation." evidence="11 15 17">
    <original>S</original>
    <variation>A</variation>
    <location>
        <position position="444"/>
    </location>
</feature>
<feature type="mutagenesis site" description="No effect on K-439 sumoylation." evidence="11 15 17">
    <original>S</original>
    <variation>E</variation>
    <location>
        <position position="444"/>
    </location>
</feature>
<feature type="helix" evidence="29">
    <location>
        <begin position="14"/>
        <end position="39"/>
    </location>
</feature>
<feature type="strand" evidence="29">
    <location>
        <begin position="42"/>
        <end position="48"/>
    </location>
</feature>
<feature type="strand" evidence="29">
    <location>
        <begin position="54"/>
        <end position="60"/>
    </location>
</feature>
<feature type="helix" evidence="29">
    <location>
        <begin position="62"/>
        <end position="71"/>
    </location>
</feature>
<feature type="strand" evidence="29">
    <location>
        <begin position="77"/>
        <end position="79"/>
    </location>
</feature>
<feature type="helix" evidence="29">
    <location>
        <begin position="81"/>
        <end position="89"/>
    </location>
</feature>